<feature type="signal peptide" evidence="2">
    <location>
        <begin position="1"/>
        <end position="21"/>
    </location>
</feature>
<feature type="chain" id="PRO_0000034234" description="Protein disulfide-isomerase A5">
    <location>
        <begin position="22"/>
        <end position="517"/>
    </location>
</feature>
<feature type="domain" description="Thioredoxin 1" evidence="3">
    <location>
        <begin position="132"/>
        <end position="259"/>
    </location>
</feature>
<feature type="domain" description="Thioredoxin 2" evidence="3">
    <location>
        <begin position="268"/>
        <end position="382"/>
    </location>
</feature>
<feature type="domain" description="Thioredoxin 3" evidence="3">
    <location>
        <begin position="376"/>
        <end position="504"/>
    </location>
</feature>
<feature type="short sequence motif" description="Prevents secretion from ER" evidence="4">
    <location>
        <begin position="514"/>
        <end position="517"/>
    </location>
</feature>
<feature type="disulfide bond" evidence="1">
    <location>
        <begin position="83"/>
        <end position="92"/>
    </location>
</feature>
<feature type="disulfide bond" description="Redox-active" evidence="3">
    <location>
        <begin position="180"/>
        <end position="183"/>
    </location>
</feature>
<feature type="disulfide bond" description="Redox-active" evidence="3">
    <location>
        <begin position="303"/>
        <end position="306"/>
    </location>
</feature>
<feature type="disulfide bond" description="Redox-active" evidence="3">
    <location>
        <begin position="424"/>
        <end position="427"/>
    </location>
</feature>
<gene>
    <name type="primary">Pdia5</name>
    <name type="synonym">Pdir</name>
</gene>
<organism>
    <name type="scientific">Mus musculus</name>
    <name type="common">Mouse</name>
    <dbReference type="NCBI Taxonomy" id="10090"/>
    <lineage>
        <taxon>Eukaryota</taxon>
        <taxon>Metazoa</taxon>
        <taxon>Chordata</taxon>
        <taxon>Craniata</taxon>
        <taxon>Vertebrata</taxon>
        <taxon>Euteleostomi</taxon>
        <taxon>Mammalia</taxon>
        <taxon>Eutheria</taxon>
        <taxon>Euarchontoglires</taxon>
        <taxon>Glires</taxon>
        <taxon>Rodentia</taxon>
        <taxon>Myomorpha</taxon>
        <taxon>Muroidea</taxon>
        <taxon>Muridae</taxon>
        <taxon>Murinae</taxon>
        <taxon>Mus</taxon>
        <taxon>Mus</taxon>
    </lineage>
</organism>
<name>PDIA5_MOUSE</name>
<dbReference type="EC" id="5.3.4.1"/>
<dbReference type="EMBL" id="BC009151">
    <property type="protein sequence ID" value="AAH09151.1"/>
    <property type="molecule type" value="mRNA"/>
</dbReference>
<dbReference type="CCDS" id="CCDS37323.1"/>
<dbReference type="RefSeq" id="NP_082571.1">
    <property type="nucleotide sequence ID" value="NM_028295.1"/>
</dbReference>
<dbReference type="SMR" id="Q921X9"/>
<dbReference type="BioGRID" id="215462">
    <property type="interactions" value="5"/>
</dbReference>
<dbReference type="FunCoup" id="Q921X9">
    <property type="interactions" value="1379"/>
</dbReference>
<dbReference type="STRING" id="10090.ENSMUSP00000023550"/>
<dbReference type="GlyGen" id="Q921X9">
    <property type="glycosylation" value="1 site, 1 O-linked glycan (1 site)"/>
</dbReference>
<dbReference type="iPTMnet" id="Q921X9"/>
<dbReference type="PhosphoSitePlus" id="Q921X9"/>
<dbReference type="SwissPalm" id="Q921X9"/>
<dbReference type="jPOST" id="Q921X9"/>
<dbReference type="PaxDb" id="10090-ENSMUSP00000023550"/>
<dbReference type="PeptideAtlas" id="Q921X9"/>
<dbReference type="ProteomicsDB" id="294049"/>
<dbReference type="Pumba" id="Q921X9"/>
<dbReference type="Antibodypedia" id="32940">
    <property type="antibodies" value="190 antibodies from 28 providers"/>
</dbReference>
<dbReference type="DNASU" id="72599"/>
<dbReference type="Ensembl" id="ENSMUST00000023550.9">
    <property type="protein sequence ID" value="ENSMUSP00000023550.8"/>
    <property type="gene ID" value="ENSMUSG00000022844.9"/>
</dbReference>
<dbReference type="GeneID" id="72599"/>
<dbReference type="KEGG" id="mmu:72599"/>
<dbReference type="UCSC" id="uc007zbl.1">
    <property type="organism name" value="mouse"/>
</dbReference>
<dbReference type="AGR" id="MGI:1919849"/>
<dbReference type="CTD" id="10954"/>
<dbReference type="MGI" id="MGI:1919849">
    <property type="gene designation" value="Pdia5"/>
</dbReference>
<dbReference type="VEuPathDB" id="HostDB:ENSMUSG00000022844"/>
<dbReference type="eggNOG" id="KOG0191">
    <property type="taxonomic scope" value="Eukaryota"/>
</dbReference>
<dbReference type="GeneTree" id="ENSGT00940000156797"/>
<dbReference type="HOGENOM" id="CLU_021181_1_0_1"/>
<dbReference type="InParanoid" id="Q921X9"/>
<dbReference type="OMA" id="FCKKMKP"/>
<dbReference type="OrthoDB" id="74910at2759"/>
<dbReference type="PhylomeDB" id="Q921X9"/>
<dbReference type="TreeFam" id="TF106379"/>
<dbReference type="BioGRID-ORCS" id="72599">
    <property type="hits" value="0 hits in 77 CRISPR screens"/>
</dbReference>
<dbReference type="ChiTaRS" id="Pdia5">
    <property type="organism name" value="mouse"/>
</dbReference>
<dbReference type="PRO" id="PR:Q921X9"/>
<dbReference type="Proteomes" id="UP000000589">
    <property type="component" value="Chromosome 16"/>
</dbReference>
<dbReference type="RNAct" id="Q921X9">
    <property type="molecule type" value="protein"/>
</dbReference>
<dbReference type="Bgee" id="ENSMUSG00000022844">
    <property type="expression patterns" value="Expressed in placenta labyrinth and 224 other cell types or tissues"/>
</dbReference>
<dbReference type="GO" id="GO:0005788">
    <property type="term" value="C:endoplasmic reticulum lumen"/>
    <property type="evidence" value="ECO:0007669"/>
    <property type="project" value="UniProtKB-SubCell"/>
</dbReference>
<dbReference type="GO" id="GO:0003756">
    <property type="term" value="F:protein disulfide isomerase activity"/>
    <property type="evidence" value="ECO:0007669"/>
    <property type="project" value="UniProtKB-EC"/>
</dbReference>
<dbReference type="GO" id="GO:0015035">
    <property type="term" value="F:protein-disulfide reductase activity"/>
    <property type="evidence" value="ECO:0007669"/>
    <property type="project" value="Ensembl"/>
</dbReference>
<dbReference type="GO" id="GO:0006457">
    <property type="term" value="P:protein folding"/>
    <property type="evidence" value="ECO:0007669"/>
    <property type="project" value="Ensembl"/>
</dbReference>
<dbReference type="CDD" id="cd02997">
    <property type="entry name" value="PDI_a_PDIR"/>
    <property type="match status" value="3"/>
</dbReference>
<dbReference type="CDD" id="cd03067">
    <property type="entry name" value="PDI_b_PDIR_N"/>
    <property type="match status" value="1"/>
</dbReference>
<dbReference type="FunFam" id="3.40.30.10:FF:000029">
    <property type="entry name" value="protein disulfide-isomerase A5 isoform X2"/>
    <property type="match status" value="3"/>
</dbReference>
<dbReference type="FunFam" id="3.40.30.10:FF:000105">
    <property type="entry name" value="protein disulfide-isomerase A5 isoform X2"/>
    <property type="match status" value="1"/>
</dbReference>
<dbReference type="Gene3D" id="3.40.30.10">
    <property type="entry name" value="Glutaredoxin"/>
    <property type="match status" value="4"/>
</dbReference>
<dbReference type="InterPro" id="IPR051063">
    <property type="entry name" value="PDI"/>
</dbReference>
<dbReference type="InterPro" id="IPR046374">
    <property type="entry name" value="PDI_a_PDIR"/>
</dbReference>
<dbReference type="InterPro" id="IPR041865">
    <property type="entry name" value="PDI_b_PDIR_N"/>
</dbReference>
<dbReference type="InterPro" id="IPR036249">
    <property type="entry name" value="Thioredoxin-like_sf"/>
</dbReference>
<dbReference type="InterPro" id="IPR017937">
    <property type="entry name" value="Thioredoxin_CS"/>
</dbReference>
<dbReference type="InterPro" id="IPR013766">
    <property type="entry name" value="Thioredoxin_domain"/>
</dbReference>
<dbReference type="PANTHER" id="PTHR45672:SF2">
    <property type="entry name" value="PROTEIN DISULFIDE-ISOMERASE A5"/>
    <property type="match status" value="1"/>
</dbReference>
<dbReference type="PANTHER" id="PTHR45672">
    <property type="entry name" value="PROTEIN DISULFIDE-ISOMERASE C17H9.14C-RELATED"/>
    <property type="match status" value="1"/>
</dbReference>
<dbReference type="Pfam" id="PF00085">
    <property type="entry name" value="Thioredoxin"/>
    <property type="match status" value="3"/>
</dbReference>
<dbReference type="PRINTS" id="PR00421">
    <property type="entry name" value="THIOREDOXIN"/>
</dbReference>
<dbReference type="SUPFAM" id="SSF52833">
    <property type="entry name" value="Thioredoxin-like"/>
    <property type="match status" value="4"/>
</dbReference>
<dbReference type="PROSITE" id="PS00014">
    <property type="entry name" value="ER_TARGET"/>
    <property type="match status" value="1"/>
</dbReference>
<dbReference type="PROSITE" id="PS00194">
    <property type="entry name" value="THIOREDOXIN_1"/>
    <property type="match status" value="2"/>
</dbReference>
<dbReference type="PROSITE" id="PS51352">
    <property type="entry name" value="THIOREDOXIN_2"/>
    <property type="match status" value="3"/>
</dbReference>
<proteinExistence type="evidence at protein level"/>
<evidence type="ECO:0000250" key="1">
    <source>
        <dbReference type="UniProtKB" id="Q14554"/>
    </source>
</evidence>
<evidence type="ECO:0000255" key="2"/>
<evidence type="ECO:0000255" key="3">
    <source>
        <dbReference type="PROSITE-ProRule" id="PRU00691"/>
    </source>
</evidence>
<evidence type="ECO:0000255" key="4">
    <source>
        <dbReference type="PROSITE-ProRule" id="PRU10138"/>
    </source>
</evidence>
<evidence type="ECO:0000305" key="5"/>
<keyword id="KW-1015">Disulfide bond</keyword>
<keyword id="KW-0256">Endoplasmic reticulum</keyword>
<keyword id="KW-0413">Isomerase</keyword>
<keyword id="KW-0676">Redox-active center</keyword>
<keyword id="KW-1185">Reference proteome</keyword>
<keyword id="KW-0677">Repeat</keyword>
<keyword id="KW-0732">Signal</keyword>
<sequence length="517" mass="59267">MARAWGLLLAIGVVLPTWLSSTKVSSLIERISDPKDLKKLLRTRNNVLVLYSESEVAAESHLKLLSTVAQAVKGQGTVCWVDCGDAESRKLCKKMKVDLSPKDKKIELFHYQDGAFHMQYDRAVTLKSIVAFLKDPKGPPLWEEDPGAKDVVHIDSEKDFRRLLKREEKPLLMMFYAPWCSMCKRIMPHFQKAATQVRGHIVLAGMNVYPSEFENIKEEYNVRGYPTICYFEKGRFLFPYENYGSTAEDIVEWLKNPLPPQPQVPETPWADEGGSVYHLTDEDFDQFVKEHSSVLVMFHAPWCGHCKKMKPEFESAAEVLHGDAESSGVLAAVDATVNEALAGRFHISAFPTLKYFKNGEQQAVPALRTKKKFIEWMQNPEAPPPPEPTWEEQQTSVLHLVGDNFRDTLKKKKHTLVMFYAPWCPHCKKVIPHFTATADAFKEDRKIACAAVDCVKDKNQDLCQQEAVKAYPTFHYYHYGKLVEKYESDRTELGFTSFIRTLREGDLKRLEKRREEL</sequence>
<comment type="catalytic activity">
    <reaction>
        <text>Catalyzes the rearrangement of -S-S- bonds in proteins.</text>
        <dbReference type="EC" id="5.3.4.1"/>
    </reaction>
</comment>
<comment type="subunit">
    <text evidence="1">Interacts with CALR (via P-domain).</text>
</comment>
<comment type="subcellular location">
    <subcellularLocation>
        <location evidence="4">Endoplasmic reticulum lumen</location>
    </subcellularLocation>
</comment>
<comment type="similarity">
    <text evidence="5">Belongs to the protein disulfide isomerase family.</text>
</comment>
<protein>
    <recommendedName>
        <fullName>Protein disulfide-isomerase A5</fullName>
        <ecNumber>5.3.4.1</ecNumber>
    </recommendedName>
    <alternativeName>
        <fullName>Protein disulfide isomerase-related protein</fullName>
    </alternativeName>
</protein>
<accession>Q921X9</accession>
<reference key="1">
    <citation type="journal article" date="2004" name="Genome Res.">
        <title>The status, quality, and expansion of the NIH full-length cDNA project: the Mammalian Gene Collection (MGC).</title>
        <authorList>
            <consortium name="The MGC Project Team"/>
        </authorList>
    </citation>
    <scope>NUCLEOTIDE SEQUENCE [LARGE SCALE MRNA]</scope>
    <source>
        <strain>FVB/N</strain>
        <tissue>Mammary tumor</tissue>
    </source>
</reference>
<reference key="2">
    <citation type="journal article" date="2010" name="Cell">
        <title>A tissue-specific atlas of mouse protein phosphorylation and expression.</title>
        <authorList>
            <person name="Huttlin E.L."/>
            <person name="Jedrychowski M.P."/>
            <person name="Elias J.E."/>
            <person name="Goswami T."/>
            <person name="Rad R."/>
            <person name="Beausoleil S.A."/>
            <person name="Villen J."/>
            <person name="Haas W."/>
            <person name="Sowa M.E."/>
            <person name="Gygi S.P."/>
        </authorList>
    </citation>
    <scope>IDENTIFICATION BY MASS SPECTROMETRY [LARGE SCALE ANALYSIS]</scope>
    <source>
        <tissue>Brown adipose tissue</tissue>
        <tissue>Kidney</tissue>
        <tissue>Liver</tissue>
        <tissue>Lung</tissue>
        <tissue>Pancreas</tissue>
        <tissue>Spleen</tissue>
        <tissue>Testis</tissue>
    </source>
</reference>